<organism>
    <name type="scientific">Eremothecium gossypii (strain ATCC 10895 / CBS 109.51 / FGSC 9923 / NRRL Y-1056)</name>
    <name type="common">Yeast</name>
    <name type="synonym">Ashbya gossypii</name>
    <dbReference type="NCBI Taxonomy" id="284811"/>
    <lineage>
        <taxon>Eukaryota</taxon>
        <taxon>Fungi</taxon>
        <taxon>Dikarya</taxon>
        <taxon>Ascomycota</taxon>
        <taxon>Saccharomycotina</taxon>
        <taxon>Saccharomycetes</taxon>
        <taxon>Saccharomycetales</taxon>
        <taxon>Saccharomycetaceae</taxon>
        <taxon>Eremothecium</taxon>
    </lineage>
</organism>
<evidence type="ECO:0000250" key="1"/>
<evidence type="ECO:0000256" key="2">
    <source>
        <dbReference type="SAM" id="MobiDB-lite"/>
    </source>
</evidence>
<evidence type="ECO:0000305" key="3"/>
<dbReference type="EMBL" id="AE016815">
    <property type="protein sequence ID" value="AAS50892.1"/>
    <property type="molecule type" value="Genomic_DNA"/>
</dbReference>
<dbReference type="RefSeq" id="NP_983068.1">
    <property type="nucleotide sequence ID" value="NM_208421.1"/>
</dbReference>
<dbReference type="FunCoup" id="Q75DA3">
    <property type="interactions" value="1010"/>
</dbReference>
<dbReference type="STRING" id="284811.Q75DA3"/>
<dbReference type="EnsemblFungi" id="AAS50892">
    <property type="protein sequence ID" value="AAS50892"/>
    <property type="gene ID" value="AGOS_ABR121C"/>
</dbReference>
<dbReference type="GeneID" id="4619176"/>
<dbReference type="KEGG" id="ago:AGOS_ABR121C"/>
<dbReference type="eggNOG" id="KOG3152">
    <property type="taxonomic scope" value="Eukaryota"/>
</dbReference>
<dbReference type="HOGENOM" id="CLU_054086_0_0_1"/>
<dbReference type="InParanoid" id="Q75DA3"/>
<dbReference type="OMA" id="HMLSEQM"/>
<dbReference type="OrthoDB" id="287393at2759"/>
<dbReference type="Proteomes" id="UP000000591">
    <property type="component" value="Chromosome II"/>
</dbReference>
<dbReference type="GO" id="GO:0005730">
    <property type="term" value="C:nucleolus"/>
    <property type="evidence" value="ECO:0000318"/>
    <property type="project" value="GO_Central"/>
</dbReference>
<dbReference type="GO" id="GO:0032040">
    <property type="term" value="C:small-subunit processome"/>
    <property type="evidence" value="ECO:0007669"/>
    <property type="project" value="EnsemblFungi"/>
</dbReference>
<dbReference type="GO" id="GO:0001671">
    <property type="term" value="F:ATPase activator activity"/>
    <property type="evidence" value="ECO:0007669"/>
    <property type="project" value="EnsemblFungi"/>
</dbReference>
<dbReference type="GO" id="GO:0003723">
    <property type="term" value="F:RNA binding"/>
    <property type="evidence" value="ECO:0000318"/>
    <property type="project" value="GO_Central"/>
</dbReference>
<dbReference type="GO" id="GO:0000480">
    <property type="term" value="P:endonucleolytic cleavage in 5'-ETS of tricistronic rRNA transcript (SSU-rRNA, 5.8S rRNA, LSU-rRNA)"/>
    <property type="evidence" value="ECO:0000318"/>
    <property type="project" value="GO_Central"/>
</dbReference>
<dbReference type="GO" id="GO:0000447">
    <property type="term" value="P:endonucleolytic cleavage in ITS1 to separate SSU-rRNA from 5.8S rRNA and LSU-rRNA from tricistronic rRNA transcript (SSU-rRNA, 5.8S rRNA, LSU-rRNA)"/>
    <property type="evidence" value="ECO:0000318"/>
    <property type="project" value="GO_Central"/>
</dbReference>
<dbReference type="GO" id="GO:0000472">
    <property type="term" value="P:endonucleolytic cleavage to generate mature 5'-end of SSU-rRNA from (SSU-rRNA, 5.8S rRNA, LSU-rRNA)"/>
    <property type="evidence" value="ECO:0000318"/>
    <property type="project" value="GO_Central"/>
</dbReference>
<dbReference type="GO" id="GO:0034462">
    <property type="term" value="P:small-subunit processome assembly"/>
    <property type="evidence" value="ECO:0000318"/>
    <property type="project" value="GO_Central"/>
</dbReference>
<dbReference type="CDD" id="cd12263">
    <property type="entry name" value="RRM_ABT1_like"/>
    <property type="match status" value="1"/>
</dbReference>
<dbReference type="FunFam" id="3.30.70.330:FF:000825">
    <property type="entry name" value="Pre-rRNA-processing protein ESF2"/>
    <property type="match status" value="1"/>
</dbReference>
<dbReference type="Gene3D" id="3.30.70.330">
    <property type="match status" value="1"/>
</dbReference>
<dbReference type="InterPro" id="IPR039119">
    <property type="entry name" value="ABT1/Esf2"/>
</dbReference>
<dbReference type="InterPro" id="IPR034353">
    <property type="entry name" value="ABT1/ESF2_RRM"/>
</dbReference>
<dbReference type="InterPro" id="IPR012677">
    <property type="entry name" value="Nucleotide-bd_a/b_plait_sf"/>
</dbReference>
<dbReference type="InterPro" id="IPR035979">
    <property type="entry name" value="RBD_domain_sf"/>
</dbReference>
<dbReference type="PANTHER" id="PTHR12311">
    <property type="entry name" value="ACTIVATOR OF BASAL TRANSCRIPTION 1"/>
    <property type="match status" value="1"/>
</dbReference>
<dbReference type="PANTHER" id="PTHR12311:SF7">
    <property type="entry name" value="ACTIVATOR OF BASAL TRANSCRIPTION 1"/>
    <property type="match status" value="1"/>
</dbReference>
<dbReference type="SUPFAM" id="SSF54928">
    <property type="entry name" value="RNA-binding domain, RBD"/>
    <property type="match status" value="1"/>
</dbReference>
<gene>
    <name type="primary">ESF2</name>
    <name type="ordered locus">ABR121C</name>
</gene>
<name>ESF2_EREGS</name>
<comment type="function">
    <text evidence="1">Involved in the small subunit (SSU) processome assembly and function, and in the 18S rRNA synthesis. Required for the early cleavages at sites A0, A1 and A2 (By similarity).</text>
</comment>
<comment type="subcellular location">
    <subcellularLocation>
        <location evidence="1">Nucleus</location>
        <location evidence="1">Nucleolus</location>
    </subcellularLocation>
</comment>
<comment type="similarity">
    <text evidence="3">Belongs to the ESF2/ABP1 family.</text>
</comment>
<reference key="1">
    <citation type="journal article" date="2004" name="Science">
        <title>The Ashbya gossypii genome as a tool for mapping the ancient Saccharomyces cerevisiae genome.</title>
        <authorList>
            <person name="Dietrich F.S."/>
            <person name="Voegeli S."/>
            <person name="Brachat S."/>
            <person name="Lerch A."/>
            <person name="Gates K."/>
            <person name="Steiner S."/>
            <person name="Mohr C."/>
            <person name="Poehlmann R."/>
            <person name="Luedi P."/>
            <person name="Choi S."/>
            <person name="Wing R.A."/>
            <person name="Flavier A."/>
            <person name="Gaffney T.D."/>
            <person name="Philippsen P."/>
        </authorList>
    </citation>
    <scope>NUCLEOTIDE SEQUENCE [LARGE SCALE GENOMIC DNA]</scope>
    <source>
        <strain>ATCC 10895 / CBS 109.51 / FGSC 9923 / NRRL Y-1056</strain>
    </source>
</reference>
<reference key="2">
    <citation type="journal article" date="2013" name="G3 (Bethesda)">
        <title>Genomes of Ashbya fungi isolated from insects reveal four mating-type loci, numerous translocations, lack of transposons, and distinct gene duplications.</title>
        <authorList>
            <person name="Dietrich F.S."/>
            <person name="Voegeli S."/>
            <person name="Kuo S."/>
            <person name="Philippsen P."/>
        </authorList>
    </citation>
    <scope>GENOME REANNOTATION</scope>
    <source>
        <strain>ATCC 10895 / CBS 109.51 / FGSC 9923 / NRRL Y-1056</strain>
    </source>
</reference>
<accession>Q75DA3</accession>
<keyword id="KW-0539">Nucleus</keyword>
<keyword id="KW-1185">Reference proteome</keyword>
<keyword id="KW-0690">Ribosome biogenesis</keyword>
<keyword id="KW-0694">RNA-binding</keyword>
<keyword id="KW-0698">rRNA processing</keyword>
<feature type="chain" id="PRO_0000285361" description="Pre-rRNA-processing protein ESF2">
    <location>
        <begin position="1"/>
        <end position="314"/>
    </location>
</feature>
<feature type="domain" description="RRM">
    <location>
        <begin position="116"/>
        <end position="206"/>
    </location>
</feature>
<feature type="region of interest" description="Disordered" evidence="2">
    <location>
        <begin position="1"/>
        <end position="95"/>
    </location>
</feature>
<feature type="region of interest" description="Disordered" evidence="2">
    <location>
        <begin position="260"/>
        <end position="314"/>
    </location>
</feature>
<feature type="compositionally biased region" description="Acidic residues" evidence="2">
    <location>
        <begin position="1"/>
        <end position="17"/>
    </location>
</feature>
<feature type="compositionally biased region" description="Basic and acidic residues" evidence="2">
    <location>
        <begin position="18"/>
        <end position="28"/>
    </location>
</feature>
<feature type="compositionally biased region" description="Acidic residues" evidence="2">
    <location>
        <begin position="37"/>
        <end position="55"/>
    </location>
</feature>
<feature type="compositionally biased region" description="Basic and acidic residues" evidence="2">
    <location>
        <begin position="83"/>
        <end position="95"/>
    </location>
</feature>
<feature type="compositionally biased region" description="Basic and acidic residues" evidence="2">
    <location>
        <begin position="267"/>
        <end position="280"/>
    </location>
</feature>
<feature type="compositionally biased region" description="Polar residues" evidence="2">
    <location>
        <begin position="289"/>
        <end position="314"/>
    </location>
</feature>
<sequence length="314" mass="35749">MSDNDSDVQDFSSEEEDHGLLIDRKKQQTLDFAQDGSDSEGGSDLDDDDIAEEESPIQNETKAATGEEPATADGDNIAPQSADELRPEERADQLKQERLRRLKKLKASKKSNHKTGVVYLSKIPPYMKPAKMRQILSRFGDLDRLFLKREDEHSHRQRVKGGGNKKVMFREGWAEFIRKKDAKLCAETLNGNIIGGKKGNFYHDDVMNVKYLSGFKWADLTEQIARENDVRQSKLQLEISQANKLNAEFIRNVEKSKMLNNIRAKKHKDEDSSERTESHLPVKQRKVTSNRASAPESQKQPASEKLSNVLHNLF</sequence>
<protein>
    <recommendedName>
        <fullName>Pre-rRNA-processing protein ESF2</fullName>
    </recommendedName>
    <alternativeName>
        <fullName>18S rRNA factor 2</fullName>
    </alternativeName>
</protein>
<proteinExistence type="inferred from homology"/>